<organism>
    <name type="scientific">Oxybasis rubra</name>
    <name type="common">Red goosefoot</name>
    <name type="synonym">Chenopodium rubrum</name>
    <dbReference type="NCBI Taxonomy" id="3560"/>
    <lineage>
        <taxon>Eukaryota</taxon>
        <taxon>Viridiplantae</taxon>
        <taxon>Streptophyta</taxon>
        <taxon>Embryophyta</taxon>
        <taxon>Tracheophyta</taxon>
        <taxon>Spermatophyta</taxon>
        <taxon>Magnoliopsida</taxon>
        <taxon>eudicotyledons</taxon>
        <taxon>Gunneridae</taxon>
        <taxon>Pentapetalae</taxon>
        <taxon>Caryophyllales</taxon>
        <taxon>Chenopodiaceae</taxon>
        <taxon>Chenopodioideae</taxon>
        <taxon>Atripliceae</taxon>
        <taxon>Oxybasis</taxon>
    </lineage>
</organism>
<proteinExistence type="inferred from homology"/>
<keyword id="KW-0067">ATP-binding</keyword>
<keyword id="KW-0963">Cytoplasm</keyword>
<keyword id="KW-0206">Cytoskeleton</keyword>
<keyword id="KW-0378">Hydrolase</keyword>
<keyword id="KW-0547">Nucleotide-binding</keyword>
<name>ACT_OXYRB</name>
<sequence length="85" mass="9513">KIWHHTFYNELRVAPEEHPVLLTEAPLNPKANREKMTQIMFETFNVPAMYVAIQAVLSLYASGRTTGIVLDSGDGVSHTVPIYEG</sequence>
<feature type="chain" id="PRO_0000088908" description="Actin">
    <location>
        <begin position="1" status="less than"/>
        <end position="85" status="greater than"/>
    </location>
</feature>
<feature type="non-terminal residue">
    <location>
        <position position="1"/>
    </location>
</feature>
<feature type="non-terminal residue">
    <location>
        <position position="85"/>
    </location>
</feature>
<accession>Q39596</accession>
<reference key="1">
    <citation type="submission" date="1995-10" db="EMBL/GenBank/DDBJ databases">
        <authorList>
            <person name="Ehness R."/>
        </authorList>
    </citation>
    <scope>NUCLEOTIDE SEQUENCE [GENOMIC DNA]</scope>
</reference>
<dbReference type="EC" id="3.6.4.-" evidence="1"/>
<dbReference type="EMBL" id="X92353">
    <property type="protein sequence ID" value="CAA63110.1"/>
    <property type="molecule type" value="Genomic_DNA"/>
</dbReference>
<dbReference type="SMR" id="Q39596"/>
<dbReference type="GO" id="GO:0005737">
    <property type="term" value="C:cytoplasm"/>
    <property type="evidence" value="ECO:0007669"/>
    <property type="project" value="UniProtKB-KW"/>
</dbReference>
<dbReference type="GO" id="GO:0005856">
    <property type="term" value="C:cytoskeleton"/>
    <property type="evidence" value="ECO:0007669"/>
    <property type="project" value="UniProtKB-SubCell"/>
</dbReference>
<dbReference type="GO" id="GO:0005524">
    <property type="term" value="F:ATP binding"/>
    <property type="evidence" value="ECO:0007669"/>
    <property type="project" value="UniProtKB-KW"/>
</dbReference>
<dbReference type="GO" id="GO:0016787">
    <property type="term" value="F:hydrolase activity"/>
    <property type="evidence" value="ECO:0007669"/>
    <property type="project" value="UniProtKB-KW"/>
</dbReference>
<dbReference type="FunFam" id="3.30.420.40:FF:000148">
    <property type="entry name" value="Actin, alpha skeletal muscle"/>
    <property type="match status" value="1"/>
</dbReference>
<dbReference type="Gene3D" id="3.30.420.40">
    <property type="match status" value="2"/>
</dbReference>
<dbReference type="InterPro" id="IPR004000">
    <property type="entry name" value="Actin"/>
</dbReference>
<dbReference type="InterPro" id="IPR020902">
    <property type="entry name" value="Actin/actin-like_CS"/>
</dbReference>
<dbReference type="InterPro" id="IPR043129">
    <property type="entry name" value="ATPase_NBD"/>
</dbReference>
<dbReference type="PANTHER" id="PTHR11937">
    <property type="entry name" value="ACTIN"/>
    <property type="match status" value="1"/>
</dbReference>
<dbReference type="Pfam" id="PF00022">
    <property type="entry name" value="Actin"/>
    <property type="match status" value="1"/>
</dbReference>
<dbReference type="PRINTS" id="PR00190">
    <property type="entry name" value="ACTIN"/>
</dbReference>
<dbReference type="SUPFAM" id="SSF53067">
    <property type="entry name" value="Actin-like ATPase domain"/>
    <property type="match status" value="2"/>
</dbReference>
<dbReference type="PROSITE" id="PS01132">
    <property type="entry name" value="ACTINS_ACT_LIKE"/>
    <property type="match status" value="1"/>
</dbReference>
<protein>
    <recommendedName>
        <fullName>Actin</fullName>
        <ecNumber evidence="1">3.6.4.-</ecNumber>
    </recommendedName>
</protein>
<evidence type="ECO:0000250" key="1">
    <source>
        <dbReference type="UniProtKB" id="P68137"/>
    </source>
</evidence>
<evidence type="ECO:0000305" key="2"/>
<comment type="function">
    <text>Actins are highly conserved proteins that are involved in various types of cell motility and are ubiquitously expressed in all eukaryotic cells.</text>
</comment>
<comment type="function">
    <text>Essential component of cell cytoskeleton; plays an important role in cytoplasmic streaming, cell shape determination, cell division, organelle movement and extension growth.</text>
</comment>
<comment type="catalytic activity">
    <reaction evidence="1">
        <text>ATP + H2O = ADP + phosphate + H(+)</text>
        <dbReference type="Rhea" id="RHEA:13065"/>
        <dbReference type="ChEBI" id="CHEBI:15377"/>
        <dbReference type="ChEBI" id="CHEBI:15378"/>
        <dbReference type="ChEBI" id="CHEBI:30616"/>
        <dbReference type="ChEBI" id="CHEBI:43474"/>
        <dbReference type="ChEBI" id="CHEBI:456216"/>
    </reaction>
</comment>
<comment type="subcellular location">
    <subcellularLocation>
        <location>Cytoplasm</location>
        <location>Cytoskeleton</location>
    </subcellularLocation>
</comment>
<comment type="similarity">
    <text evidence="2">Belongs to the actin family.</text>
</comment>